<reference key="1">
    <citation type="journal article" date="1996" name="Nucleic Acids Res.">
        <title>Complete sequence analysis of the genome of the bacterium Mycoplasma pneumoniae.</title>
        <authorList>
            <person name="Himmelreich R."/>
            <person name="Hilbert H."/>
            <person name="Plagens H."/>
            <person name="Pirkl E."/>
            <person name="Li B.-C."/>
            <person name="Herrmann R."/>
        </authorList>
    </citation>
    <scope>NUCLEOTIDE SEQUENCE [LARGE SCALE GENOMIC DNA]</scope>
    <source>
        <strain>ATCC 29342 / M129 / Subtype 1</strain>
    </source>
</reference>
<protein>
    <recommendedName>
        <fullName>Uncharacterized protein MPN_206</fullName>
    </recommendedName>
</protein>
<accession>P75570</accession>
<feature type="chain" id="PRO_0000210656" description="Uncharacterized protein MPN_206">
    <location>
        <begin position="1"/>
        <end position="113"/>
    </location>
</feature>
<proteinExistence type="predicted"/>
<sequence length="113" mass="13237">MEERPPIPNIKNTVAKRKSTSWLLRCHQLGRPKFFKAGSLVVKLVVASPPFWRLSVILNAQNKKPIPTKISTIPKTIKRTRAFSMRIQPFRTFSVWIWFEKTPYYNSIQFSAF</sequence>
<name>Y206_MYCPN</name>
<organism>
    <name type="scientific">Mycoplasma pneumoniae (strain ATCC 29342 / M129 / Subtype 1)</name>
    <name type="common">Mycoplasmoides pneumoniae</name>
    <dbReference type="NCBI Taxonomy" id="272634"/>
    <lineage>
        <taxon>Bacteria</taxon>
        <taxon>Bacillati</taxon>
        <taxon>Mycoplasmatota</taxon>
        <taxon>Mycoplasmoidales</taxon>
        <taxon>Mycoplasmoidaceae</taxon>
        <taxon>Mycoplasmoides</taxon>
    </lineage>
</organism>
<keyword id="KW-1185">Reference proteome</keyword>
<dbReference type="EMBL" id="U00089">
    <property type="protein sequence ID" value="AAB96273.1"/>
    <property type="molecule type" value="Genomic_DNA"/>
</dbReference>
<dbReference type="PIR" id="S73951">
    <property type="entry name" value="S73951"/>
</dbReference>
<dbReference type="EnsemblBacteria" id="AAB96273">
    <property type="protein sequence ID" value="AAB96273"/>
    <property type="gene ID" value="MPN_206"/>
</dbReference>
<dbReference type="KEGG" id="mpn:MPN_206"/>
<dbReference type="HOGENOM" id="CLU_2130713_0_0_14"/>
<dbReference type="Proteomes" id="UP000000808">
    <property type="component" value="Chromosome"/>
</dbReference>
<gene>
    <name type="ordered locus">MPN_206</name>
    <name type="ORF">GT9_orf113</name>
    <name type="ORF">MP625</name>
</gene>